<feature type="chain" id="PRO_0000385113" description="Uncharacterized protein ORF93">
    <location>
        <begin position="1"/>
        <end position="404"/>
    </location>
</feature>
<gene>
    <name type="ORF">ORF93</name>
</gene>
<sequence length="404" mass="46228">MAQLVDELILRTFTNKMRYHGLGLRYNSYCNYVLYDTERSLADRIMDPPKSINRIPAQPIRTNIIKTGTRDVDRKELLKYSLELATEFDTARRVLLSSLMILSDREEKETKLINFNSKPGFVAIDESNGGMIMYGINNPMKSQTKIYIPLDENDDSSVHIGICFGNPKSEKILFYDVKENDPYDNPQSVYDRIEEIEEGSILEELFISKEDTDKQGDEDNDNEEEDADFFLKLKKDMYGLSGIQGYAYTNQDINYNVPTELLPLESVRHSKNIVLFSGVDMDNNYAVYALNIGKLVSSEGLKRRVWVAPWTKLLIGTEGELFTFEDKEKINVCEYDEIDGAWKVKRTLHVSVSDGVSNGISKLFTHKDIPIELLEEVITEAEKDVQENAIGRSQDEKGETNQET</sequence>
<keyword id="KW-1185">Reference proteome</keyword>
<reference key="1">
    <citation type="journal article" date="2005" name="J. Gen. Virol.">
        <title>A novel class of herpesvirus with bivalve hosts.</title>
        <authorList>
            <person name="Davison A.J."/>
            <person name="Trus B.L."/>
            <person name="Cheng N."/>
            <person name="Steven A.C."/>
            <person name="Watson M.S."/>
            <person name="Cunningham C."/>
            <person name="Le Deuff R.M."/>
            <person name="Renault T."/>
        </authorList>
    </citation>
    <scope>NUCLEOTIDE SEQUENCE [LARGE SCALE GENOMIC DNA]</scope>
</reference>
<name>Y093_OSHVF</name>
<dbReference type="EMBL" id="AY509253">
    <property type="protein sequence ID" value="AAS00979.1"/>
    <property type="molecule type" value="Genomic_DNA"/>
</dbReference>
<dbReference type="RefSeq" id="YP_024632.1">
    <property type="nucleotide sequence ID" value="NC_005881.2"/>
</dbReference>
<dbReference type="SMR" id="Q6R7D6"/>
<dbReference type="KEGG" id="vg:2948222"/>
<dbReference type="Proteomes" id="UP000007021">
    <property type="component" value="Segment"/>
</dbReference>
<organism>
    <name type="scientific">Ostreid herpesvirus 1 (isolate France)</name>
    <name type="common">OsHV-1</name>
    <name type="synonym">Pacific oyster herpesvirus</name>
    <dbReference type="NCBI Taxonomy" id="654903"/>
    <lineage>
        <taxon>Viruses</taxon>
        <taxon>Duplodnaviria</taxon>
        <taxon>Heunggongvirae</taxon>
        <taxon>Peploviricota</taxon>
        <taxon>Herviviricetes</taxon>
        <taxon>Herpesvirales</taxon>
        <taxon>Malacoherpesviridae</taxon>
        <taxon>Ostreavirus</taxon>
        <taxon>Ostreavirus ostreidmalaco1</taxon>
        <taxon>Ostreid herpesvirus 1</taxon>
    </lineage>
</organism>
<accession>Q6R7D6</accession>
<organismHost>
    <name type="scientific">Magallana gigas</name>
    <name type="common">Pacific oyster</name>
    <name type="synonym">Crassostrea gigas</name>
    <dbReference type="NCBI Taxonomy" id="29159"/>
</organismHost>
<organismHost>
    <name type="scientific">Pecten maximus</name>
    <name type="common">King scallop</name>
    <name type="synonym">Pilgrim's clam</name>
    <dbReference type="NCBI Taxonomy" id="6579"/>
</organismHost>
<protein>
    <recommendedName>
        <fullName>Uncharacterized protein ORF93</fullName>
    </recommendedName>
</protein>
<proteinExistence type="predicted"/>